<proteinExistence type="inferred from homology"/>
<organism>
    <name type="scientific">Vibrio campbellii (strain ATCC BAA-1116)</name>
    <dbReference type="NCBI Taxonomy" id="2902295"/>
    <lineage>
        <taxon>Bacteria</taxon>
        <taxon>Pseudomonadati</taxon>
        <taxon>Pseudomonadota</taxon>
        <taxon>Gammaproteobacteria</taxon>
        <taxon>Vibrionales</taxon>
        <taxon>Vibrionaceae</taxon>
        <taxon>Vibrio</taxon>
    </lineage>
</organism>
<comment type="function">
    <text evidence="1">Specifically methylates the N7 position of guanine in position 527 of 16S rRNA.</text>
</comment>
<comment type="catalytic activity">
    <reaction evidence="1">
        <text>guanosine(527) in 16S rRNA + S-adenosyl-L-methionine = N(7)-methylguanosine(527) in 16S rRNA + S-adenosyl-L-homocysteine</text>
        <dbReference type="Rhea" id="RHEA:42732"/>
        <dbReference type="Rhea" id="RHEA-COMP:10209"/>
        <dbReference type="Rhea" id="RHEA-COMP:10210"/>
        <dbReference type="ChEBI" id="CHEBI:57856"/>
        <dbReference type="ChEBI" id="CHEBI:59789"/>
        <dbReference type="ChEBI" id="CHEBI:74269"/>
        <dbReference type="ChEBI" id="CHEBI:74480"/>
        <dbReference type="EC" id="2.1.1.170"/>
    </reaction>
</comment>
<comment type="subcellular location">
    <subcellularLocation>
        <location evidence="1">Cytoplasm</location>
    </subcellularLocation>
</comment>
<comment type="similarity">
    <text evidence="1">Belongs to the methyltransferase superfamily. RNA methyltransferase RsmG family.</text>
</comment>
<dbReference type="EC" id="2.1.1.170" evidence="1"/>
<dbReference type="EMBL" id="CP000789">
    <property type="protein sequence ID" value="ABU69447.1"/>
    <property type="molecule type" value="Genomic_DNA"/>
</dbReference>
<dbReference type="RefSeq" id="WP_012126660.1">
    <property type="nucleotide sequence ID" value="NC_009783.1"/>
</dbReference>
<dbReference type="SMR" id="A7N0X5"/>
<dbReference type="KEGG" id="vha:VIBHAR_00432"/>
<dbReference type="PATRIC" id="fig|338187.25.peg.2158"/>
<dbReference type="Proteomes" id="UP000008152">
    <property type="component" value="Chromosome I"/>
</dbReference>
<dbReference type="GO" id="GO:0005829">
    <property type="term" value="C:cytosol"/>
    <property type="evidence" value="ECO:0007669"/>
    <property type="project" value="TreeGrafter"/>
</dbReference>
<dbReference type="GO" id="GO:0070043">
    <property type="term" value="F:rRNA (guanine-N7-)-methyltransferase activity"/>
    <property type="evidence" value="ECO:0007669"/>
    <property type="project" value="UniProtKB-UniRule"/>
</dbReference>
<dbReference type="CDD" id="cd02440">
    <property type="entry name" value="AdoMet_MTases"/>
    <property type="match status" value="1"/>
</dbReference>
<dbReference type="FunFam" id="3.40.50.150:FF:000032">
    <property type="entry name" value="Ribosomal RNA small subunit methyltransferase G"/>
    <property type="match status" value="1"/>
</dbReference>
<dbReference type="Gene3D" id="3.40.50.150">
    <property type="entry name" value="Vaccinia Virus protein VP39"/>
    <property type="match status" value="1"/>
</dbReference>
<dbReference type="HAMAP" id="MF_00074">
    <property type="entry name" value="16SrRNA_methyltr_G"/>
    <property type="match status" value="1"/>
</dbReference>
<dbReference type="InterPro" id="IPR003682">
    <property type="entry name" value="rRNA_ssu_MeTfrase_G"/>
</dbReference>
<dbReference type="InterPro" id="IPR029063">
    <property type="entry name" value="SAM-dependent_MTases_sf"/>
</dbReference>
<dbReference type="NCBIfam" id="TIGR00138">
    <property type="entry name" value="rsmG_gidB"/>
    <property type="match status" value="1"/>
</dbReference>
<dbReference type="PANTHER" id="PTHR31760">
    <property type="entry name" value="S-ADENOSYL-L-METHIONINE-DEPENDENT METHYLTRANSFERASES SUPERFAMILY PROTEIN"/>
    <property type="match status" value="1"/>
</dbReference>
<dbReference type="PANTHER" id="PTHR31760:SF0">
    <property type="entry name" value="S-ADENOSYL-L-METHIONINE-DEPENDENT METHYLTRANSFERASES SUPERFAMILY PROTEIN"/>
    <property type="match status" value="1"/>
</dbReference>
<dbReference type="Pfam" id="PF02527">
    <property type="entry name" value="GidB"/>
    <property type="match status" value="1"/>
</dbReference>
<dbReference type="PIRSF" id="PIRSF003078">
    <property type="entry name" value="GidB"/>
    <property type="match status" value="1"/>
</dbReference>
<dbReference type="SUPFAM" id="SSF53335">
    <property type="entry name" value="S-adenosyl-L-methionine-dependent methyltransferases"/>
    <property type="match status" value="1"/>
</dbReference>
<gene>
    <name evidence="1" type="primary">rsmG</name>
    <name type="ordered locus">VIBHAR_00432</name>
</gene>
<feature type="chain" id="PRO_1000010234" description="Ribosomal RNA small subunit methyltransferase G">
    <location>
        <begin position="1"/>
        <end position="211"/>
    </location>
</feature>
<feature type="binding site" evidence="1">
    <location>
        <position position="76"/>
    </location>
    <ligand>
        <name>S-adenosyl-L-methionine</name>
        <dbReference type="ChEBI" id="CHEBI:59789"/>
    </ligand>
</feature>
<feature type="binding site" evidence="1">
    <location>
        <position position="81"/>
    </location>
    <ligand>
        <name>S-adenosyl-L-methionine</name>
        <dbReference type="ChEBI" id="CHEBI:59789"/>
    </ligand>
</feature>
<feature type="binding site" evidence="1">
    <location>
        <begin position="127"/>
        <end position="128"/>
    </location>
    <ligand>
        <name>S-adenosyl-L-methionine</name>
        <dbReference type="ChEBI" id="CHEBI:59789"/>
    </ligand>
</feature>
<feature type="binding site" evidence="1">
    <location>
        <position position="142"/>
    </location>
    <ligand>
        <name>S-adenosyl-L-methionine</name>
        <dbReference type="ChEBI" id="CHEBI:59789"/>
    </ligand>
</feature>
<sequence>MSALRTRLDELIAQTDLEVSEKQREQLVGYVELLDKWNKAYNLTSVRDPLEMLVKHILDSIVVSTHLPGERFIDVGTGPGLPGIPLAIMNPEKTFFLLDSLGKRIRFIKQVVHTLGLKNVTAIQSRVEEFQPEEKFDGVLSRAFASMTDMVEWCHHLPKQDSGVFLALKGLHPKDEIDLLPEWCSVTEVISLAVPELEGDRHLVILSRKEN</sequence>
<evidence type="ECO:0000255" key="1">
    <source>
        <dbReference type="HAMAP-Rule" id="MF_00074"/>
    </source>
</evidence>
<reference key="1">
    <citation type="submission" date="2007-08" db="EMBL/GenBank/DDBJ databases">
        <authorList>
            <consortium name="The Vibrio harveyi Genome Sequencing Project"/>
            <person name="Bassler B."/>
            <person name="Clifton S.W."/>
            <person name="Fulton L."/>
            <person name="Delehaunty K."/>
            <person name="Fronick C."/>
            <person name="Harrison M."/>
            <person name="Markivic C."/>
            <person name="Fulton R."/>
            <person name="Tin-Wollam A.-M."/>
            <person name="Shah N."/>
            <person name="Pepin K."/>
            <person name="Nash W."/>
            <person name="Thiruvilangam P."/>
            <person name="Bhonagiri V."/>
            <person name="Waters C."/>
            <person name="Tu K.C."/>
            <person name="Irgon J."/>
            <person name="Wilson R.K."/>
        </authorList>
    </citation>
    <scope>NUCLEOTIDE SEQUENCE [LARGE SCALE GENOMIC DNA]</scope>
    <source>
        <strain>ATCC BAA-1116 / BB120</strain>
    </source>
</reference>
<accession>A7N0X5</accession>
<keyword id="KW-0963">Cytoplasm</keyword>
<keyword id="KW-0489">Methyltransferase</keyword>
<keyword id="KW-0698">rRNA processing</keyword>
<keyword id="KW-0949">S-adenosyl-L-methionine</keyword>
<keyword id="KW-0808">Transferase</keyword>
<name>RSMG_VIBC1</name>
<protein>
    <recommendedName>
        <fullName evidence="1">Ribosomal RNA small subunit methyltransferase G</fullName>
        <ecNumber evidence="1">2.1.1.170</ecNumber>
    </recommendedName>
    <alternativeName>
        <fullName evidence="1">16S rRNA 7-methylguanosine methyltransferase</fullName>
        <shortName evidence="1">16S rRNA m7G methyltransferase</shortName>
    </alternativeName>
</protein>